<organism>
    <name type="scientific">Rhodopseudomonas palustris (strain ATCC BAA-98 / CGA009)</name>
    <dbReference type="NCBI Taxonomy" id="258594"/>
    <lineage>
        <taxon>Bacteria</taxon>
        <taxon>Pseudomonadati</taxon>
        <taxon>Pseudomonadota</taxon>
        <taxon>Alphaproteobacteria</taxon>
        <taxon>Hyphomicrobiales</taxon>
        <taxon>Nitrobacteraceae</taxon>
        <taxon>Rhodopseudomonas</taxon>
    </lineage>
</organism>
<protein>
    <recommendedName>
        <fullName evidence="1">NADH-quinone oxidoreductase subunit H 1</fullName>
        <ecNumber evidence="1">7.1.1.-</ecNumber>
    </recommendedName>
    <alternativeName>
        <fullName evidence="1">NADH dehydrogenase I subunit H 1</fullName>
    </alternativeName>
    <alternativeName>
        <fullName evidence="1">NDH-1 subunit H 1</fullName>
    </alternativeName>
</protein>
<keyword id="KW-0997">Cell inner membrane</keyword>
<keyword id="KW-1003">Cell membrane</keyword>
<keyword id="KW-0472">Membrane</keyword>
<keyword id="KW-0520">NAD</keyword>
<keyword id="KW-0874">Quinone</keyword>
<keyword id="KW-1278">Translocase</keyword>
<keyword id="KW-0812">Transmembrane</keyword>
<keyword id="KW-1133">Transmembrane helix</keyword>
<keyword id="KW-0830">Ubiquinone</keyword>
<proteinExistence type="inferred from homology"/>
<evidence type="ECO:0000255" key="1">
    <source>
        <dbReference type="HAMAP-Rule" id="MF_01350"/>
    </source>
</evidence>
<feature type="chain" id="PRO_0000244942" description="NADH-quinone oxidoreductase subunit H 1">
    <location>
        <begin position="1"/>
        <end position="341"/>
    </location>
</feature>
<feature type="transmembrane region" description="Helical" evidence="1">
    <location>
        <begin position="13"/>
        <end position="33"/>
    </location>
</feature>
<feature type="transmembrane region" description="Helical" evidence="1">
    <location>
        <begin position="82"/>
        <end position="102"/>
    </location>
</feature>
<feature type="transmembrane region" description="Helical" evidence="1">
    <location>
        <begin position="115"/>
        <end position="135"/>
    </location>
</feature>
<feature type="transmembrane region" description="Helical" evidence="1">
    <location>
        <begin position="161"/>
        <end position="181"/>
    </location>
</feature>
<feature type="transmembrane region" description="Helical" evidence="1">
    <location>
        <begin position="190"/>
        <end position="210"/>
    </location>
</feature>
<feature type="transmembrane region" description="Helical" evidence="1">
    <location>
        <begin position="248"/>
        <end position="268"/>
    </location>
</feature>
<feature type="transmembrane region" description="Helical" evidence="1">
    <location>
        <begin position="277"/>
        <end position="297"/>
    </location>
</feature>
<feature type="transmembrane region" description="Helical" evidence="1">
    <location>
        <begin position="313"/>
        <end position="333"/>
    </location>
</feature>
<dbReference type="EC" id="7.1.1.-" evidence="1"/>
<dbReference type="EMBL" id="BX572602">
    <property type="protein sequence ID" value="CAE28384.1"/>
    <property type="molecule type" value="Genomic_DNA"/>
</dbReference>
<dbReference type="RefSeq" id="WP_011158492.1">
    <property type="nucleotide sequence ID" value="NZ_CP116810.1"/>
</dbReference>
<dbReference type="SMR" id="Q6N5N1"/>
<dbReference type="STRING" id="258594.RPA2943"/>
<dbReference type="GeneID" id="66894026"/>
<dbReference type="eggNOG" id="COG1005">
    <property type="taxonomic scope" value="Bacteria"/>
</dbReference>
<dbReference type="HOGENOM" id="CLU_015134_0_1_5"/>
<dbReference type="PhylomeDB" id="Q6N5N1"/>
<dbReference type="GO" id="GO:0005886">
    <property type="term" value="C:plasma membrane"/>
    <property type="evidence" value="ECO:0007669"/>
    <property type="project" value="UniProtKB-SubCell"/>
</dbReference>
<dbReference type="GO" id="GO:0003954">
    <property type="term" value="F:NADH dehydrogenase activity"/>
    <property type="evidence" value="ECO:0007669"/>
    <property type="project" value="TreeGrafter"/>
</dbReference>
<dbReference type="GO" id="GO:0016655">
    <property type="term" value="F:oxidoreductase activity, acting on NAD(P)H, quinone or similar compound as acceptor"/>
    <property type="evidence" value="ECO:0007669"/>
    <property type="project" value="UniProtKB-UniRule"/>
</dbReference>
<dbReference type="GO" id="GO:0048038">
    <property type="term" value="F:quinone binding"/>
    <property type="evidence" value="ECO:0007669"/>
    <property type="project" value="UniProtKB-KW"/>
</dbReference>
<dbReference type="GO" id="GO:0009060">
    <property type="term" value="P:aerobic respiration"/>
    <property type="evidence" value="ECO:0007669"/>
    <property type="project" value="TreeGrafter"/>
</dbReference>
<dbReference type="HAMAP" id="MF_01350">
    <property type="entry name" value="NDH1_NuoH"/>
    <property type="match status" value="1"/>
</dbReference>
<dbReference type="InterPro" id="IPR001694">
    <property type="entry name" value="NADH_UbQ_OxRdtase_su1/FPO"/>
</dbReference>
<dbReference type="InterPro" id="IPR018086">
    <property type="entry name" value="NADH_UbQ_OxRdtase_su1_CS"/>
</dbReference>
<dbReference type="NCBIfam" id="NF004741">
    <property type="entry name" value="PRK06076.1-2"/>
    <property type="match status" value="1"/>
</dbReference>
<dbReference type="NCBIfam" id="NF004745">
    <property type="entry name" value="PRK06076.1-6"/>
    <property type="match status" value="1"/>
</dbReference>
<dbReference type="PANTHER" id="PTHR11432">
    <property type="entry name" value="NADH DEHYDROGENASE SUBUNIT 1"/>
    <property type="match status" value="1"/>
</dbReference>
<dbReference type="PANTHER" id="PTHR11432:SF3">
    <property type="entry name" value="NADH-UBIQUINONE OXIDOREDUCTASE CHAIN 1"/>
    <property type="match status" value="1"/>
</dbReference>
<dbReference type="Pfam" id="PF00146">
    <property type="entry name" value="NADHdh"/>
    <property type="match status" value="1"/>
</dbReference>
<dbReference type="PROSITE" id="PS00668">
    <property type="entry name" value="COMPLEX1_ND1_2"/>
    <property type="match status" value="1"/>
</dbReference>
<name>NUOH1_RHOPA</name>
<reference key="1">
    <citation type="journal article" date="2004" name="Nat. Biotechnol.">
        <title>Complete genome sequence of the metabolically versatile photosynthetic bacterium Rhodopseudomonas palustris.</title>
        <authorList>
            <person name="Larimer F.W."/>
            <person name="Chain P."/>
            <person name="Hauser L."/>
            <person name="Lamerdin J.E."/>
            <person name="Malfatti S."/>
            <person name="Do L."/>
            <person name="Land M.L."/>
            <person name="Pelletier D.A."/>
            <person name="Beatty J.T."/>
            <person name="Lang A.S."/>
            <person name="Tabita F.R."/>
            <person name="Gibson J.L."/>
            <person name="Hanson T.E."/>
            <person name="Bobst C."/>
            <person name="Torres y Torres J.L."/>
            <person name="Peres C."/>
            <person name="Harrison F.H."/>
            <person name="Gibson J."/>
            <person name="Harwood C.S."/>
        </authorList>
    </citation>
    <scope>NUCLEOTIDE SEQUENCE [LARGE SCALE GENOMIC DNA]</scope>
    <source>
        <strain>ATCC BAA-98 / CGA009</strain>
    </source>
</reference>
<gene>
    <name evidence="1" type="primary">nuoH1</name>
    <name type="ordered locus">RPA2943</name>
</gene>
<comment type="function">
    <text evidence="1">NDH-1 shuttles electrons from NADH, via FMN and iron-sulfur (Fe-S) centers, to quinones in the respiratory chain. The immediate electron acceptor for the enzyme in this species is believed to be ubiquinone. Couples the redox reaction to proton translocation (for every two electrons transferred, four hydrogen ions are translocated across the cytoplasmic membrane), and thus conserves the redox energy in a proton gradient. This subunit may bind ubiquinone.</text>
</comment>
<comment type="catalytic activity">
    <reaction evidence="1">
        <text>a quinone + NADH + 5 H(+)(in) = a quinol + NAD(+) + 4 H(+)(out)</text>
        <dbReference type="Rhea" id="RHEA:57888"/>
        <dbReference type="ChEBI" id="CHEBI:15378"/>
        <dbReference type="ChEBI" id="CHEBI:24646"/>
        <dbReference type="ChEBI" id="CHEBI:57540"/>
        <dbReference type="ChEBI" id="CHEBI:57945"/>
        <dbReference type="ChEBI" id="CHEBI:132124"/>
    </reaction>
</comment>
<comment type="subunit">
    <text evidence="1">NDH-1 is composed of 14 different subunits. Subunits NuoA, H, J, K, L, M, N constitute the membrane sector of the complex.</text>
</comment>
<comment type="subcellular location">
    <subcellularLocation>
        <location evidence="1">Cell inner membrane</location>
        <topology evidence="1">Multi-pass membrane protein</topology>
    </subcellularLocation>
</comment>
<comment type="similarity">
    <text evidence="1">Belongs to the complex I subunit 1 family.</text>
</comment>
<accession>Q6N5N1</accession>
<sequence>MAEFFATNLWPLLVVIGQSVLLLVILLIAIAYILLADRKIWAAVQIRRGPNVVGPWGLLQSFADLLKFVLKEPTIPDGANKGLFLLAPLVTCVLALAAWAVIPVNAGWVIADINVGVLYILAVSSLSVYGIIMAGWSSNSKYPFLAALRSAAQMVSYEVSIGFVVICVLLCVGSLNLTAIVEAQDGKWGMLGWYWLPLFPMFVVFYVSALAETNRPPFDLVEAESELVAGFMVEYSSTPYLLFMLGEYVAIVTMCAMGTILFLGGWLPPVPYAPFTWVPGIVWFSLKLLFMFFLFAMAKAIVPRYRYDQLMRLGWKVFLPLSLAMVVIVASVLQFADLAPK</sequence>